<gene>
    <name evidence="1" type="primary">pckG</name>
    <name type="synonym">pck1</name>
    <name type="synonym">pckA</name>
    <name type="ordered locus">BQ2027_MB0217</name>
</gene>
<feature type="chain" id="PRO_0000103607" description="Phosphoenolpyruvate carboxykinase [GTP]">
    <location>
        <begin position="1"/>
        <end position="606"/>
    </location>
</feature>
<feature type="active site" evidence="1">
    <location>
        <position position="273"/>
    </location>
</feature>
<feature type="binding site" evidence="1">
    <location>
        <position position="81"/>
    </location>
    <ligand>
        <name>substrate</name>
    </ligand>
</feature>
<feature type="binding site" evidence="1">
    <location>
        <begin position="220"/>
        <end position="222"/>
    </location>
    <ligand>
        <name>substrate</name>
    </ligand>
</feature>
<feature type="binding site" evidence="1">
    <location>
        <position position="229"/>
    </location>
    <ligand>
        <name>Mn(2+)</name>
        <dbReference type="ChEBI" id="CHEBI:29035"/>
    </ligand>
</feature>
<feature type="binding site" evidence="1">
    <location>
        <position position="249"/>
    </location>
    <ligand>
        <name>Mn(2+)</name>
        <dbReference type="ChEBI" id="CHEBI:29035"/>
    </ligand>
</feature>
<feature type="binding site" evidence="1">
    <location>
        <position position="271"/>
    </location>
    <ligand>
        <name>substrate</name>
    </ligand>
</feature>
<feature type="binding site" evidence="1">
    <location>
        <begin position="272"/>
        <end position="277"/>
    </location>
    <ligand>
        <name>GTP</name>
        <dbReference type="ChEBI" id="CHEBI:37565"/>
    </ligand>
</feature>
<feature type="binding site" evidence="1">
    <location>
        <position position="296"/>
    </location>
    <ligand>
        <name>Mn(2+)</name>
        <dbReference type="ChEBI" id="CHEBI:29035"/>
    </ligand>
</feature>
<feature type="binding site" evidence="1">
    <location>
        <begin position="387"/>
        <end position="389"/>
    </location>
    <ligand>
        <name>substrate</name>
    </ligand>
</feature>
<feature type="binding site" evidence="1">
    <location>
        <position position="389"/>
    </location>
    <ligand>
        <name>GTP</name>
        <dbReference type="ChEBI" id="CHEBI:37565"/>
    </ligand>
</feature>
<feature type="binding site" evidence="1">
    <location>
        <position position="420"/>
    </location>
    <ligand>
        <name>GTP</name>
        <dbReference type="ChEBI" id="CHEBI:37565"/>
    </ligand>
</feature>
<feature type="binding site" evidence="1">
    <location>
        <begin position="515"/>
        <end position="518"/>
    </location>
    <ligand>
        <name>GTP</name>
        <dbReference type="ChEBI" id="CHEBI:37565"/>
    </ligand>
</feature>
<evidence type="ECO:0000255" key="1">
    <source>
        <dbReference type="HAMAP-Rule" id="MF_00452"/>
    </source>
</evidence>
<comment type="function">
    <text evidence="1">Catalyzes the conversion of oxaloacetate (OAA) to phosphoenolpyruvate (PEP), the rate-limiting step in the metabolic pathway that produces glucose from lactate and other precursors derived from the citric acid cycle.</text>
</comment>
<comment type="catalytic activity">
    <reaction evidence="1">
        <text>oxaloacetate + GTP = phosphoenolpyruvate + GDP + CO2</text>
        <dbReference type="Rhea" id="RHEA:10388"/>
        <dbReference type="ChEBI" id="CHEBI:16452"/>
        <dbReference type="ChEBI" id="CHEBI:16526"/>
        <dbReference type="ChEBI" id="CHEBI:37565"/>
        <dbReference type="ChEBI" id="CHEBI:58189"/>
        <dbReference type="ChEBI" id="CHEBI:58702"/>
        <dbReference type="EC" id="4.1.1.32"/>
    </reaction>
</comment>
<comment type="cofactor">
    <cofactor evidence="1">
        <name>Mn(2+)</name>
        <dbReference type="ChEBI" id="CHEBI:29035"/>
    </cofactor>
    <text evidence="1">Binds 1 Mn(2+) ion per subunit.</text>
</comment>
<comment type="pathway">
    <text evidence="1">Carbohydrate biosynthesis; gluconeogenesis.</text>
</comment>
<comment type="subunit">
    <text evidence="1">Monomer.</text>
</comment>
<comment type="subcellular location">
    <subcellularLocation>
        <location evidence="1">Cytoplasm</location>
    </subcellularLocation>
</comment>
<comment type="similarity">
    <text evidence="1">Belongs to the phosphoenolpyruvate carboxykinase [GTP] family.</text>
</comment>
<dbReference type="EC" id="4.1.1.32" evidence="1"/>
<dbReference type="EMBL" id="LT708304">
    <property type="protein sequence ID" value="SIT98696.1"/>
    <property type="molecule type" value="Genomic_DNA"/>
</dbReference>
<dbReference type="RefSeq" id="NP_853882.1">
    <property type="nucleotide sequence ID" value="NC_002945.3"/>
</dbReference>
<dbReference type="RefSeq" id="WP_003401212.1">
    <property type="nucleotide sequence ID" value="NC_002945.4"/>
</dbReference>
<dbReference type="SMR" id="P65687"/>
<dbReference type="PATRIC" id="fig|233413.5.peg.243"/>
<dbReference type="UniPathway" id="UPA00138"/>
<dbReference type="Proteomes" id="UP000001419">
    <property type="component" value="Chromosome"/>
</dbReference>
<dbReference type="GO" id="GO:0005829">
    <property type="term" value="C:cytosol"/>
    <property type="evidence" value="ECO:0007669"/>
    <property type="project" value="TreeGrafter"/>
</dbReference>
<dbReference type="GO" id="GO:0005525">
    <property type="term" value="F:GTP binding"/>
    <property type="evidence" value="ECO:0007669"/>
    <property type="project" value="UniProtKB-UniRule"/>
</dbReference>
<dbReference type="GO" id="GO:0030145">
    <property type="term" value="F:manganese ion binding"/>
    <property type="evidence" value="ECO:0007669"/>
    <property type="project" value="UniProtKB-UniRule"/>
</dbReference>
<dbReference type="GO" id="GO:0004613">
    <property type="term" value="F:phosphoenolpyruvate carboxykinase (GTP) activity"/>
    <property type="evidence" value="ECO:0007669"/>
    <property type="project" value="UniProtKB-UniRule"/>
</dbReference>
<dbReference type="GO" id="GO:0071333">
    <property type="term" value="P:cellular response to glucose stimulus"/>
    <property type="evidence" value="ECO:0007669"/>
    <property type="project" value="TreeGrafter"/>
</dbReference>
<dbReference type="GO" id="GO:0006094">
    <property type="term" value="P:gluconeogenesis"/>
    <property type="evidence" value="ECO:0007669"/>
    <property type="project" value="UniProtKB-UniRule"/>
</dbReference>
<dbReference type="GO" id="GO:0046327">
    <property type="term" value="P:glycerol biosynthetic process from pyruvate"/>
    <property type="evidence" value="ECO:0007669"/>
    <property type="project" value="TreeGrafter"/>
</dbReference>
<dbReference type="GO" id="GO:0006107">
    <property type="term" value="P:oxaloacetate metabolic process"/>
    <property type="evidence" value="ECO:0007669"/>
    <property type="project" value="TreeGrafter"/>
</dbReference>
<dbReference type="GO" id="GO:0019543">
    <property type="term" value="P:propionate catabolic process"/>
    <property type="evidence" value="ECO:0007669"/>
    <property type="project" value="TreeGrafter"/>
</dbReference>
<dbReference type="GO" id="GO:0033993">
    <property type="term" value="P:response to lipid"/>
    <property type="evidence" value="ECO:0007669"/>
    <property type="project" value="TreeGrafter"/>
</dbReference>
<dbReference type="GO" id="GO:0042594">
    <property type="term" value="P:response to starvation"/>
    <property type="evidence" value="ECO:0007669"/>
    <property type="project" value="TreeGrafter"/>
</dbReference>
<dbReference type="CDD" id="cd00819">
    <property type="entry name" value="PEPCK_GTP"/>
    <property type="match status" value="1"/>
</dbReference>
<dbReference type="FunFam" id="3.40.449.10:FF:000005">
    <property type="entry name" value="Phosphoenolpyruvate carboxykinase [GTP]"/>
    <property type="match status" value="1"/>
</dbReference>
<dbReference type="Gene3D" id="3.90.228.20">
    <property type="match status" value="1"/>
</dbReference>
<dbReference type="Gene3D" id="3.40.449.10">
    <property type="entry name" value="Phosphoenolpyruvate Carboxykinase, domain 1"/>
    <property type="match status" value="1"/>
</dbReference>
<dbReference type="Gene3D" id="2.170.8.10">
    <property type="entry name" value="Phosphoenolpyruvate Carboxykinase, domain 2"/>
    <property type="match status" value="1"/>
</dbReference>
<dbReference type="HAMAP" id="MF_00452">
    <property type="entry name" value="PEPCK_GTP"/>
    <property type="match status" value="1"/>
</dbReference>
<dbReference type="InterPro" id="IPR018091">
    <property type="entry name" value="PEP_carboxykin_GTP_CS"/>
</dbReference>
<dbReference type="InterPro" id="IPR013035">
    <property type="entry name" value="PEP_carboxykinase_C"/>
</dbReference>
<dbReference type="InterPro" id="IPR008209">
    <property type="entry name" value="PEP_carboxykinase_GTP"/>
</dbReference>
<dbReference type="InterPro" id="IPR035077">
    <property type="entry name" value="PEP_carboxykinase_GTP_C"/>
</dbReference>
<dbReference type="InterPro" id="IPR035078">
    <property type="entry name" value="PEP_carboxykinase_GTP_N"/>
</dbReference>
<dbReference type="InterPro" id="IPR008210">
    <property type="entry name" value="PEP_carboxykinase_N"/>
</dbReference>
<dbReference type="NCBIfam" id="NF003253">
    <property type="entry name" value="PRK04210.1"/>
    <property type="match status" value="1"/>
</dbReference>
<dbReference type="PANTHER" id="PTHR11561">
    <property type="entry name" value="PHOSPHOENOLPYRUVATE CARBOXYKINASE"/>
    <property type="match status" value="1"/>
</dbReference>
<dbReference type="PANTHER" id="PTHR11561:SF0">
    <property type="entry name" value="PHOSPHOENOLPYRUVATE CARBOXYKINASE [GTP]-RELATED"/>
    <property type="match status" value="1"/>
</dbReference>
<dbReference type="Pfam" id="PF00821">
    <property type="entry name" value="PEPCK_GTP"/>
    <property type="match status" value="1"/>
</dbReference>
<dbReference type="Pfam" id="PF17297">
    <property type="entry name" value="PEPCK_N"/>
    <property type="match status" value="1"/>
</dbReference>
<dbReference type="PIRSF" id="PIRSF001348">
    <property type="entry name" value="PEP_carboxykinase_GTP"/>
    <property type="match status" value="1"/>
</dbReference>
<dbReference type="SUPFAM" id="SSF68923">
    <property type="entry name" value="PEP carboxykinase N-terminal domain"/>
    <property type="match status" value="1"/>
</dbReference>
<dbReference type="SUPFAM" id="SSF53795">
    <property type="entry name" value="PEP carboxykinase-like"/>
    <property type="match status" value="1"/>
</dbReference>
<dbReference type="PROSITE" id="PS00505">
    <property type="entry name" value="PEPCK_GTP"/>
    <property type="match status" value="1"/>
</dbReference>
<reference key="1">
    <citation type="journal article" date="2003" name="Proc. Natl. Acad. Sci. U.S.A.">
        <title>The complete genome sequence of Mycobacterium bovis.</title>
        <authorList>
            <person name="Garnier T."/>
            <person name="Eiglmeier K."/>
            <person name="Camus J.-C."/>
            <person name="Medina N."/>
            <person name="Mansoor H."/>
            <person name="Pryor M."/>
            <person name="Duthoy S."/>
            <person name="Grondin S."/>
            <person name="Lacroix C."/>
            <person name="Monsempe C."/>
            <person name="Simon S."/>
            <person name="Harris B."/>
            <person name="Atkin R."/>
            <person name="Doggett J."/>
            <person name="Mayes R."/>
            <person name="Keating L."/>
            <person name="Wheeler P.R."/>
            <person name="Parkhill J."/>
            <person name="Barrell B.G."/>
            <person name="Cole S.T."/>
            <person name="Gordon S.V."/>
            <person name="Hewinson R.G."/>
        </authorList>
    </citation>
    <scope>NUCLEOTIDE SEQUENCE [LARGE SCALE GENOMIC DNA]</scope>
    <source>
        <strain>ATCC BAA-935 / AF2122/97</strain>
    </source>
</reference>
<reference key="2">
    <citation type="journal article" date="2017" name="Genome Announc.">
        <title>Updated reference genome sequence and annotation of Mycobacterium bovis AF2122/97.</title>
        <authorList>
            <person name="Malone K.M."/>
            <person name="Farrell D."/>
            <person name="Stuber T.P."/>
            <person name="Schubert O.T."/>
            <person name="Aebersold R."/>
            <person name="Robbe-Austerman S."/>
            <person name="Gordon S.V."/>
        </authorList>
    </citation>
    <scope>NUCLEOTIDE SEQUENCE [LARGE SCALE GENOMIC DNA]</scope>
    <scope>GENOME REANNOTATION</scope>
    <source>
        <strain>ATCC BAA-935 / AF2122/97</strain>
    </source>
</reference>
<proteinExistence type="inferred from homology"/>
<sequence>MTSATIPGLDTAPTNHQGLLSWVEEVAELTQPDRVVFTDGSEEEFQRLCDQLVEAGTFIRLNPEKHKNSYLALSDPSDVARVESRTYICSAKEIDAGPTNNWMDPGEMRSIMKDLYRGCMRGRTMYVVPFCMGPLGAEDPKLGVEITDSEYVVVSMRTMTRMGKAALEKMGDDGFFVKALHSVGAPLEPGQKDVAWPCSETKYITHFPETREIWSYGSGYGGNALLGKKCYSLRIASAMAHDEGWLAEHMLILKLISPENKAYYFAAAFPSACGKTNLAMLQPTIPGWRAETLGDDIAWMRFGKDGRLYAVNPEFGFFGVAPGTNWKSNPNAMRTIAAGNTVFTNVALTDDGDVWWEGLEGDPQHLIDWKGNDWYFRETETNAAHPNSRYCTPMSQCPILAPEWDDPQGVPISGILFGGRRKTTVPLVTEARDWQHGVFIGATLGSEQTAAAEGKVGNVRRDPMAMLPFLGYNVGDYFQHWINLGKHADESKLPKVFFVNWFRRGDDGRFLWPGFGENSRVLKWIVDRIEHKAGGATTPIGTVPAVEDLDLDGLDVDAADVAAALAVDADEWRQELPLIEEWLQFVGEKLPTGVKDEFDALKERLG</sequence>
<name>PCKG_MYCBO</name>
<protein>
    <recommendedName>
        <fullName evidence="1">Phosphoenolpyruvate carboxykinase [GTP]</fullName>
        <shortName evidence="1">PEP carboxykinase</shortName>
        <shortName evidence="1">PEPCK</shortName>
        <ecNumber evidence="1">4.1.1.32</ecNumber>
    </recommendedName>
</protein>
<keyword id="KW-0963">Cytoplasm</keyword>
<keyword id="KW-0210">Decarboxylase</keyword>
<keyword id="KW-0312">Gluconeogenesis</keyword>
<keyword id="KW-0342">GTP-binding</keyword>
<keyword id="KW-0456">Lyase</keyword>
<keyword id="KW-0464">Manganese</keyword>
<keyword id="KW-0479">Metal-binding</keyword>
<keyword id="KW-0547">Nucleotide-binding</keyword>
<keyword id="KW-1185">Reference proteome</keyword>
<organism>
    <name type="scientific">Mycobacterium bovis (strain ATCC BAA-935 / AF2122/97)</name>
    <dbReference type="NCBI Taxonomy" id="233413"/>
    <lineage>
        <taxon>Bacteria</taxon>
        <taxon>Bacillati</taxon>
        <taxon>Actinomycetota</taxon>
        <taxon>Actinomycetes</taxon>
        <taxon>Mycobacteriales</taxon>
        <taxon>Mycobacteriaceae</taxon>
        <taxon>Mycobacterium</taxon>
        <taxon>Mycobacterium tuberculosis complex</taxon>
    </lineage>
</organism>
<accession>P65687</accession>
<accession>A0A1R3XWT9</accession>
<accession>P96393</accession>
<accession>X2BEE3</accession>